<dbReference type="EC" id="4.2.2.n1" evidence="1"/>
<dbReference type="EMBL" id="CP000800">
    <property type="protein sequence ID" value="ABV19615.1"/>
    <property type="molecule type" value="Genomic_DNA"/>
</dbReference>
<dbReference type="RefSeq" id="WP_001298916.1">
    <property type="nucleotide sequence ID" value="NC_009801.1"/>
</dbReference>
<dbReference type="SMR" id="A7ZR89"/>
<dbReference type="CAZy" id="GH23">
    <property type="family name" value="Glycoside Hydrolase Family 23"/>
</dbReference>
<dbReference type="GeneID" id="93779028"/>
<dbReference type="KEGG" id="ecw:EcE24377A_3309"/>
<dbReference type="HOGENOM" id="CLU_044583_0_0_6"/>
<dbReference type="Proteomes" id="UP000001122">
    <property type="component" value="Chromosome"/>
</dbReference>
<dbReference type="GO" id="GO:0009279">
    <property type="term" value="C:cell outer membrane"/>
    <property type="evidence" value="ECO:0007669"/>
    <property type="project" value="UniProtKB-SubCell"/>
</dbReference>
<dbReference type="GO" id="GO:0016798">
    <property type="term" value="F:hydrolase activity, acting on glycosyl bonds"/>
    <property type="evidence" value="ECO:0007669"/>
    <property type="project" value="InterPro"/>
</dbReference>
<dbReference type="GO" id="GO:0008933">
    <property type="term" value="F:peptidoglycan lytic transglycosylase activity"/>
    <property type="evidence" value="ECO:0007669"/>
    <property type="project" value="UniProtKB-UniRule"/>
</dbReference>
<dbReference type="GO" id="GO:0016998">
    <property type="term" value="P:cell wall macromolecule catabolic process"/>
    <property type="evidence" value="ECO:0007669"/>
    <property type="project" value="UniProtKB-UniRule"/>
</dbReference>
<dbReference type="GO" id="GO:0071555">
    <property type="term" value="P:cell wall organization"/>
    <property type="evidence" value="ECO:0007669"/>
    <property type="project" value="UniProtKB-KW"/>
</dbReference>
<dbReference type="GO" id="GO:0000270">
    <property type="term" value="P:peptidoglycan metabolic process"/>
    <property type="evidence" value="ECO:0007669"/>
    <property type="project" value="InterPro"/>
</dbReference>
<dbReference type="CDD" id="cd16893">
    <property type="entry name" value="LT_MltC_MltE"/>
    <property type="match status" value="1"/>
</dbReference>
<dbReference type="FunFam" id="1.10.530.10:FF:000002">
    <property type="entry name" value="Membrane-bound lytic murein transglycosylase C"/>
    <property type="match status" value="1"/>
</dbReference>
<dbReference type="Gene3D" id="1.10.530.10">
    <property type="match status" value="1"/>
</dbReference>
<dbReference type="HAMAP" id="MF_01616">
    <property type="entry name" value="MltC"/>
    <property type="match status" value="1"/>
</dbReference>
<dbReference type="InterPro" id="IPR023346">
    <property type="entry name" value="Lysozyme-like_dom_sf"/>
</dbReference>
<dbReference type="InterPro" id="IPR023664">
    <property type="entry name" value="Murein_transglycosylaseC"/>
</dbReference>
<dbReference type="InterPro" id="IPR024570">
    <property type="entry name" value="Murein_transglycosylaseC_N"/>
</dbReference>
<dbReference type="InterPro" id="IPR000189">
    <property type="entry name" value="Transglyc_AS"/>
</dbReference>
<dbReference type="InterPro" id="IPR008258">
    <property type="entry name" value="Transglycosylase_SLT_dom_1"/>
</dbReference>
<dbReference type="NCBIfam" id="NF008670">
    <property type="entry name" value="PRK11671.1"/>
    <property type="match status" value="1"/>
</dbReference>
<dbReference type="PANTHER" id="PTHR37423:SF2">
    <property type="entry name" value="MEMBRANE-BOUND LYTIC MUREIN TRANSGLYCOSYLASE C"/>
    <property type="match status" value="1"/>
</dbReference>
<dbReference type="PANTHER" id="PTHR37423">
    <property type="entry name" value="SOLUBLE LYTIC MUREIN TRANSGLYCOSYLASE-RELATED"/>
    <property type="match status" value="1"/>
</dbReference>
<dbReference type="Pfam" id="PF11873">
    <property type="entry name" value="Mltc_N"/>
    <property type="match status" value="1"/>
</dbReference>
<dbReference type="Pfam" id="PF01464">
    <property type="entry name" value="SLT"/>
    <property type="match status" value="1"/>
</dbReference>
<dbReference type="SUPFAM" id="SSF53955">
    <property type="entry name" value="Lysozyme-like"/>
    <property type="match status" value="1"/>
</dbReference>
<dbReference type="PROSITE" id="PS51257">
    <property type="entry name" value="PROKAR_LIPOPROTEIN"/>
    <property type="match status" value="1"/>
</dbReference>
<dbReference type="PROSITE" id="PS00922">
    <property type="entry name" value="TRANSGLYCOSYLASE"/>
    <property type="match status" value="1"/>
</dbReference>
<reference key="1">
    <citation type="journal article" date="2008" name="J. Bacteriol.">
        <title>The pangenome structure of Escherichia coli: comparative genomic analysis of E. coli commensal and pathogenic isolates.</title>
        <authorList>
            <person name="Rasko D.A."/>
            <person name="Rosovitz M.J."/>
            <person name="Myers G.S.A."/>
            <person name="Mongodin E.F."/>
            <person name="Fricke W.F."/>
            <person name="Gajer P."/>
            <person name="Crabtree J."/>
            <person name="Sebaihia M."/>
            <person name="Thomson N.R."/>
            <person name="Chaudhuri R."/>
            <person name="Henderson I.R."/>
            <person name="Sperandio V."/>
            <person name="Ravel J."/>
        </authorList>
    </citation>
    <scope>NUCLEOTIDE SEQUENCE [LARGE SCALE GENOMIC DNA]</scope>
    <source>
        <strain>E24377A / ETEC</strain>
    </source>
</reference>
<organism>
    <name type="scientific">Escherichia coli O139:H28 (strain E24377A / ETEC)</name>
    <dbReference type="NCBI Taxonomy" id="331111"/>
    <lineage>
        <taxon>Bacteria</taxon>
        <taxon>Pseudomonadati</taxon>
        <taxon>Pseudomonadota</taxon>
        <taxon>Gammaproteobacteria</taxon>
        <taxon>Enterobacterales</taxon>
        <taxon>Enterobacteriaceae</taxon>
        <taxon>Escherichia</taxon>
    </lineage>
</organism>
<protein>
    <recommendedName>
        <fullName evidence="1">Membrane-bound lytic murein transglycosylase C</fullName>
        <ecNumber evidence="1">4.2.2.n1</ecNumber>
    </recommendedName>
    <alternativeName>
        <fullName evidence="1">Murein lyase C</fullName>
    </alternativeName>
</protein>
<evidence type="ECO:0000255" key="1">
    <source>
        <dbReference type="HAMAP-Rule" id="MF_01616"/>
    </source>
</evidence>
<feature type="signal peptide" evidence="1">
    <location>
        <begin position="1"/>
        <end position="16"/>
    </location>
</feature>
<feature type="chain" id="PRO_1000069473" description="Membrane-bound lytic murein transglycosylase C">
    <location>
        <begin position="17"/>
        <end position="359"/>
    </location>
</feature>
<feature type="lipid moiety-binding region" description="N-palmitoyl cysteine" evidence="1">
    <location>
        <position position="17"/>
    </location>
</feature>
<feature type="lipid moiety-binding region" description="S-diacylglycerol cysteine" evidence="1">
    <location>
        <position position="17"/>
    </location>
</feature>
<gene>
    <name evidence="1" type="primary">mltC</name>
    <name type="ordered locus">EcE24377A_3309</name>
</gene>
<accession>A7ZR89</accession>
<comment type="function">
    <text evidence="1">Murein-degrading enzyme. May play a role in recycling of muropeptides during cell elongation and/or cell division.</text>
</comment>
<comment type="catalytic activity">
    <reaction evidence="1">
        <text>Exolytic cleavage of the (1-&gt;4)-beta-glycosidic linkage between N-acetylmuramic acid (MurNAc) and N-acetylglucosamine (GlcNAc) residues in peptidoglycan, from either the reducing or the non-reducing ends of the peptidoglycan chains, with concomitant formation of a 1,6-anhydrobond in the MurNAc residue.</text>
        <dbReference type="EC" id="4.2.2.n1"/>
    </reaction>
</comment>
<comment type="subcellular location">
    <subcellularLocation>
        <location evidence="1">Cell outer membrane</location>
        <topology evidence="1">Lipid-anchor</topology>
    </subcellularLocation>
</comment>
<comment type="similarity">
    <text evidence="1">Belongs to the transglycosylase Slt family.</text>
</comment>
<name>MLTC_ECO24</name>
<keyword id="KW-0998">Cell outer membrane</keyword>
<keyword id="KW-0961">Cell wall biogenesis/degradation</keyword>
<keyword id="KW-0449">Lipoprotein</keyword>
<keyword id="KW-0456">Lyase</keyword>
<keyword id="KW-0472">Membrane</keyword>
<keyword id="KW-0564">Palmitate</keyword>
<keyword id="KW-1185">Reference proteome</keyword>
<keyword id="KW-0732">Signal</keyword>
<sequence length="359" mass="40112">MKKYLALALIAPLLISCSTTKKGDTYNEAWVKDTNGFDILMGQFAHNIENIWGFKEVVIAGPKDYVKYTDQYQTRSHINFDDGTITIETIAGTEPAAHLRRAIIKTLLMGDDPSSVDLYSDVDDITISKEPFLYGQVVDNTGQPIRWEGRASNFADYLLKNRLQSRSNGLRIIYSVTINMVPNHLDKRAHKYLGMVRQASRKYGVDESLILAIMQTESSFNPYAVSRSDALGLMQVVQHTAGKDVFRSQGKSGTPSRSFLFDPASNIDTGTAYLAMLNNVYLGGIDNPTSRRYAVITAYNGGAGSVLRVFSNDKIQAANIINTMTPGDVYQTLTTRHPSAESRRYLYKVNTAQKSYRRR</sequence>
<proteinExistence type="inferred from homology"/>